<protein>
    <recommendedName>
        <fullName evidence="1">Large ribosomal subunit protein bL12</fullName>
    </recommendedName>
    <alternativeName>
        <fullName evidence="2">50S ribosomal protein L7/L12</fullName>
    </alternativeName>
</protein>
<dbReference type="EMBL" id="CP000569">
    <property type="protein sequence ID" value="ABN74805.1"/>
    <property type="molecule type" value="Genomic_DNA"/>
</dbReference>
<dbReference type="RefSeq" id="WP_005599214.1">
    <property type="nucleotide sequence ID" value="NC_009053.1"/>
</dbReference>
<dbReference type="SMR" id="A3N319"/>
<dbReference type="STRING" id="416269.APL_1721"/>
<dbReference type="EnsemblBacteria" id="ABN74805">
    <property type="protein sequence ID" value="ABN74805"/>
    <property type="gene ID" value="APL_1721"/>
</dbReference>
<dbReference type="GeneID" id="48600009"/>
<dbReference type="KEGG" id="apl:APL_1721"/>
<dbReference type="eggNOG" id="COG0222">
    <property type="taxonomic scope" value="Bacteria"/>
</dbReference>
<dbReference type="HOGENOM" id="CLU_086499_3_2_6"/>
<dbReference type="Proteomes" id="UP000001432">
    <property type="component" value="Chromosome"/>
</dbReference>
<dbReference type="GO" id="GO:0022625">
    <property type="term" value="C:cytosolic large ribosomal subunit"/>
    <property type="evidence" value="ECO:0007669"/>
    <property type="project" value="TreeGrafter"/>
</dbReference>
<dbReference type="GO" id="GO:0003729">
    <property type="term" value="F:mRNA binding"/>
    <property type="evidence" value="ECO:0007669"/>
    <property type="project" value="TreeGrafter"/>
</dbReference>
<dbReference type="GO" id="GO:0003735">
    <property type="term" value="F:structural constituent of ribosome"/>
    <property type="evidence" value="ECO:0007669"/>
    <property type="project" value="InterPro"/>
</dbReference>
<dbReference type="GO" id="GO:0006412">
    <property type="term" value="P:translation"/>
    <property type="evidence" value="ECO:0007669"/>
    <property type="project" value="UniProtKB-UniRule"/>
</dbReference>
<dbReference type="CDD" id="cd00387">
    <property type="entry name" value="Ribosomal_L7_L12"/>
    <property type="match status" value="1"/>
</dbReference>
<dbReference type="FunFam" id="1.20.5.710:FF:000003">
    <property type="entry name" value="50S ribosomal protein L7/L12"/>
    <property type="match status" value="1"/>
</dbReference>
<dbReference type="FunFam" id="3.30.1390.10:FF:000001">
    <property type="entry name" value="50S ribosomal protein L7/L12"/>
    <property type="match status" value="1"/>
</dbReference>
<dbReference type="Gene3D" id="3.30.1390.10">
    <property type="match status" value="1"/>
</dbReference>
<dbReference type="Gene3D" id="1.20.5.710">
    <property type="entry name" value="Single helix bin"/>
    <property type="match status" value="1"/>
</dbReference>
<dbReference type="HAMAP" id="MF_00368">
    <property type="entry name" value="Ribosomal_bL12"/>
    <property type="match status" value="1"/>
</dbReference>
<dbReference type="InterPro" id="IPR000206">
    <property type="entry name" value="Ribosomal_bL12"/>
</dbReference>
<dbReference type="InterPro" id="IPR013823">
    <property type="entry name" value="Ribosomal_bL12_C"/>
</dbReference>
<dbReference type="InterPro" id="IPR014719">
    <property type="entry name" value="Ribosomal_bL12_C/ClpS-like"/>
</dbReference>
<dbReference type="InterPro" id="IPR008932">
    <property type="entry name" value="Ribosomal_bL12_oligo"/>
</dbReference>
<dbReference type="InterPro" id="IPR036235">
    <property type="entry name" value="Ribosomal_bL12_oligo_N_sf"/>
</dbReference>
<dbReference type="NCBIfam" id="TIGR00855">
    <property type="entry name" value="L12"/>
    <property type="match status" value="1"/>
</dbReference>
<dbReference type="PANTHER" id="PTHR45987">
    <property type="entry name" value="39S RIBOSOMAL PROTEIN L12"/>
    <property type="match status" value="1"/>
</dbReference>
<dbReference type="PANTHER" id="PTHR45987:SF4">
    <property type="entry name" value="LARGE RIBOSOMAL SUBUNIT PROTEIN BL12M"/>
    <property type="match status" value="1"/>
</dbReference>
<dbReference type="Pfam" id="PF00542">
    <property type="entry name" value="Ribosomal_L12"/>
    <property type="match status" value="1"/>
</dbReference>
<dbReference type="Pfam" id="PF16320">
    <property type="entry name" value="Ribosomal_L12_N"/>
    <property type="match status" value="1"/>
</dbReference>
<dbReference type="SUPFAM" id="SSF54736">
    <property type="entry name" value="ClpS-like"/>
    <property type="match status" value="1"/>
</dbReference>
<dbReference type="SUPFAM" id="SSF48300">
    <property type="entry name" value="Ribosomal protein L7/12, oligomerisation (N-terminal) domain"/>
    <property type="match status" value="1"/>
</dbReference>
<reference key="1">
    <citation type="journal article" date="2008" name="J. Bacteriol.">
        <title>The complete genome sequence of Actinobacillus pleuropneumoniae L20 (serotype 5b).</title>
        <authorList>
            <person name="Foote S.J."/>
            <person name="Bosse J.T."/>
            <person name="Bouevitch A.B."/>
            <person name="Langford P.R."/>
            <person name="Young N.M."/>
            <person name="Nash J.H.E."/>
        </authorList>
    </citation>
    <scope>NUCLEOTIDE SEQUENCE [LARGE SCALE GENOMIC DNA]</scope>
    <source>
        <strain>L20</strain>
    </source>
</reference>
<comment type="function">
    <text evidence="1">Forms part of the ribosomal stalk which helps the ribosome interact with GTP-bound translation factors. Is thus essential for accurate translation.</text>
</comment>
<comment type="subunit">
    <text evidence="1">Homodimer. Part of the ribosomal stalk of the 50S ribosomal subunit. Forms a multimeric L10(L12)X complex, where L10 forms an elongated spine to which 2 to 4 L12 dimers bind in a sequential fashion. Binds GTP-bound translation factors.</text>
</comment>
<comment type="similarity">
    <text evidence="1">Belongs to the bacterial ribosomal protein bL12 family.</text>
</comment>
<organism>
    <name type="scientific">Actinobacillus pleuropneumoniae serotype 5b (strain L20)</name>
    <dbReference type="NCBI Taxonomy" id="416269"/>
    <lineage>
        <taxon>Bacteria</taxon>
        <taxon>Pseudomonadati</taxon>
        <taxon>Pseudomonadota</taxon>
        <taxon>Gammaproteobacteria</taxon>
        <taxon>Pasteurellales</taxon>
        <taxon>Pasteurellaceae</taxon>
        <taxon>Actinobacillus</taxon>
    </lineage>
</organism>
<gene>
    <name evidence="1" type="primary">rplL</name>
    <name type="ordered locus">APL_1721</name>
</gene>
<evidence type="ECO:0000255" key="1">
    <source>
        <dbReference type="HAMAP-Rule" id="MF_00368"/>
    </source>
</evidence>
<evidence type="ECO:0000305" key="2"/>
<keyword id="KW-1185">Reference proteome</keyword>
<keyword id="KW-0687">Ribonucleoprotein</keyword>
<keyword id="KW-0689">Ribosomal protein</keyword>
<sequence>MSLTNEQLIEAIASKSVSEIVELIAAMEEKFGVSAAAAVAAAPAAGAAAAEEKTEFDVILAEAGANKVAVIKAVRGATGLGLKEAKDLVESAPAALKEGISKPEAEALKKELEEAGAKVEIK</sequence>
<name>RL7_ACTP2</name>
<feature type="chain" id="PRO_1000006951" description="Large ribosomal subunit protein bL12">
    <location>
        <begin position="1"/>
        <end position="122"/>
    </location>
</feature>
<proteinExistence type="inferred from homology"/>
<accession>A3N319</accession>